<name>RS10_BURM9</name>
<keyword id="KW-0687">Ribonucleoprotein</keyword>
<keyword id="KW-0689">Ribosomal protein</keyword>
<comment type="function">
    <text evidence="1">Involved in the binding of tRNA to the ribosomes.</text>
</comment>
<comment type="subunit">
    <text evidence="1">Part of the 30S ribosomal subunit.</text>
</comment>
<comment type="similarity">
    <text evidence="1">Belongs to the universal ribosomal protein uS10 family.</text>
</comment>
<reference key="1">
    <citation type="journal article" date="2010" name="Genome Biol. Evol.">
        <title>Continuing evolution of Burkholderia mallei through genome reduction and large-scale rearrangements.</title>
        <authorList>
            <person name="Losada L."/>
            <person name="Ronning C.M."/>
            <person name="DeShazer D."/>
            <person name="Woods D."/>
            <person name="Fedorova N."/>
            <person name="Kim H.S."/>
            <person name="Shabalina S.A."/>
            <person name="Pearson T.R."/>
            <person name="Brinkac L."/>
            <person name="Tan P."/>
            <person name="Nandi T."/>
            <person name="Crabtree J."/>
            <person name="Badger J."/>
            <person name="Beckstrom-Sternberg S."/>
            <person name="Saqib M."/>
            <person name="Schutzer S.E."/>
            <person name="Keim P."/>
            <person name="Nierman W.C."/>
        </authorList>
    </citation>
    <scope>NUCLEOTIDE SEQUENCE [LARGE SCALE GENOMIC DNA]</scope>
    <source>
        <strain>NCTC 10229</strain>
    </source>
</reference>
<gene>
    <name evidence="1" type="primary">rpsJ</name>
    <name type="ordered locus">BMA10229_A1923</name>
</gene>
<proteinExistence type="inferred from homology"/>
<protein>
    <recommendedName>
        <fullName evidence="1">Small ribosomal subunit protein uS10</fullName>
    </recommendedName>
    <alternativeName>
        <fullName evidence="2">30S ribosomal protein S10</fullName>
    </alternativeName>
</protein>
<organism>
    <name type="scientific">Burkholderia mallei (strain NCTC 10229)</name>
    <dbReference type="NCBI Taxonomy" id="412022"/>
    <lineage>
        <taxon>Bacteria</taxon>
        <taxon>Pseudomonadati</taxon>
        <taxon>Pseudomonadota</taxon>
        <taxon>Betaproteobacteria</taxon>
        <taxon>Burkholderiales</taxon>
        <taxon>Burkholderiaceae</taxon>
        <taxon>Burkholderia</taxon>
        <taxon>pseudomallei group</taxon>
    </lineage>
</organism>
<evidence type="ECO:0000255" key="1">
    <source>
        <dbReference type="HAMAP-Rule" id="MF_00508"/>
    </source>
</evidence>
<evidence type="ECO:0000305" key="2"/>
<dbReference type="EMBL" id="CP000546">
    <property type="protein sequence ID" value="ABN01133.1"/>
    <property type="molecule type" value="Genomic_DNA"/>
</dbReference>
<dbReference type="RefSeq" id="WP_004199280.1">
    <property type="nucleotide sequence ID" value="NC_008836.1"/>
</dbReference>
<dbReference type="SMR" id="A2S7H5"/>
<dbReference type="GeneID" id="98107161"/>
<dbReference type="KEGG" id="bml:BMA10229_A1923"/>
<dbReference type="HOGENOM" id="CLU_122625_1_3_4"/>
<dbReference type="Proteomes" id="UP000002283">
    <property type="component" value="Chromosome I"/>
</dbReference>
<dbReference type="GO" id="GO:1990904">
    <property type="term" value="C:ribonucleoprotein complex"/>
    <property type="evidence" value="ECO:0007669"/>
    <property type="project" value="UniProtKB-KW"/>
</dbReference>
<dbReference type="GO" id="GO:0005840">
    <property type="term" value="C:ribosome"/>
    <property type="evidence" value="ECO:0007669"/>
    <property type="project" value="UniProtKB-KW"/>
</dbReference>
<dbReference type="GO" id="GO:0003735">
    <property type="term" value="F:structural constituent of ribosome"/>
    <property type="evidence" value="ECO:0007669"/>
    <property type="project" value="InterPro"/>
</dbReference>
<dbReference type="GO" id="GO:0000049">
    <property type="term" value="F:tRNA binding"/>
    <property type="evidence" value="ECO:0007669"/>
    <property type="project" value="UniProtKB-UniRule"/>
</dbReference>
<dbReference type="GO" id="GO:0006412">
    <property type="term" value="P:translation"/>
    <property type="evidence" value="ECO:0007669"/>
    <property type="project" value="UniProtKB-UniRule"/>
</dbReference>
<dbReference type="FunFam" id="3.30.70.600:FF:000001">
    <property type="entry name" value="30S ribosomal protein S10"/>
    <property type="match status" value="1"/>
</dbReference>
<dbReference type="Gene3D" id="3.30.70.600">
    <property type="entry name" value="Ribosomal protein S10 domain"/>
    <property type="match status" value="1"/>
</dbReference>
<dbReference type="HAMAP" id="MF_00508">
    <property type="entry name" value="Ribosomal_uS10"/>
    <property type="match status" value="1"/>
</dbReference>
<dbReference type="InterPro" id="IPR001848">
    <property type="entry name" value="Ribosomal_uS10"/>
</dbReference>
<dbReference type="InterPro" id="IPR018268">
    <property type="entry name" value="Ribosomal_uS10_CS"/>
</dbReference>
<dbReference type="InterPro" id="IPR027486">
    <property type="entry name" value="Ribosomal_uS10_dom"/>
</dbReference>
<dbReference type="InterPro" id="IPR036838">
    <property type="entry name" value="Ribosomal_uS10_dom_sf"/>
</dbReference>
<dbReference type="NCBIfam" id="NF001861">
    <property type="entry name" value="PRK00596.1"/>
    <property type="match status" value="1"/>
</dbReference>
<dbReference type="NCBIfam" id="TIGR01049">
    <property type="entry name" value="rpsJ_bact"/>
    <property type="match status" value="1"/>
</dbReference>
<dbReference type="PANTHER" id="PTHR11700">
    <property type="entry name" value="30S RIBOSOMAL PROTEIN S10 FAMILY MEMBER"/>
    <property type="match status" value="1"/>
</dbReference>
<dbReference type="Pfam" id="PF00338">
    <property type="entry name" value="Ribosomal_S10"/>
    <property type="match status" value="1"/>
</dbReference>
<dbReference type="PRINTS" id="PR00971">
    <property type="entry name" value="RIBOSOMALS10"/>
</dbReference>
<dbReference type="SMART" id="SM01403">
    <property type="entry name" value="Ribosomal_S10"/>
    <property type="match status" value="1"/>
</dbReference>
<dbReference type="SUPFAM" id="SSF54999">
    <property type="entry name" value="Ribosomal protein S10"/>
    <property type="match status" value="1"/>
</dbReference>
<dbReference type="PROSITE" id="PS00361">
    <property type="entry name" value="RIBOSOMAL_S10"/>
    <property type="match status" value="1"/>
</dbReference>
<accession>A2S7H5</accession>
<sequence length="103" mass="11828">MQQQKIRIRLKAFDYRLIDQSAAEIVDTAKRTGAIVRGPVPLPTRIQRFDILRSPHVNKTSRDQLEIRTHQRLMDIVDPTDKTVDALMKLDLPAGVDVEIKLQ</sequence>
<feature type="chain" id="PRO_1000014998" description="Small ribosomal subunit protein uS10">
    <location>
        <begin position="1"/>
        <end position="103"/>
    </location>
</feature>